<evidence type="ECO:0000255" key="1">
    <source>
        <dbReference type="HAMAP-Rule" id="MF_00171"/>
    </source>
</evidence>
<organism>
    <name type="scientific">Chlorobium luteolum (strain DSM 273 / BCRC 81028 / 2530)</name>
    <name type="common">Pelodictyon luteolum</name>
    <dbReference type="NCBI Taxonomy" id="319225"/>
    <lineage>
        <taxon>Bacteria</taxon>
        <taxon>Pseudomonadati</taxon>
        <taxon>Chlorobiota</taxon>
        <taxon>Chlorobiia</taxon>
        <taxon>Chlorobiales</taxon>
        <taxon>Chlorobiaceae</taxon>
        <taxon>Chlorobium/Pelodictyon group</taxon>
        <taxon>Pelodictyon</taxon>
    </lineage>
</organism>
<reference key="1">
    <citation type="submission" date="2005-08" db="EMBL/GenBank/DDBJ databases">
        <title>Complete sequence of Pelodictyon luteolum DSM 273.</title>
        <authorList>
            <consortium name="US DOE Joint Genome Institute"/>
            <person name="Copeland A."/>
            <person name="Lucas S."/>
            <person name="Lapidus A."/>
            <person name="Barry K."/>
            <person name="Detter J.C."/>
            <person name="Glavina T."/>
            <person name="Hammon N."/>
            <person name="Israni S."/>
            <person name="Pitluck S."/>
            <person name="Bryant D."/>
            <person name="Schmutz J."/>
            <person name="Larimer F."/>
            <person name="Land M."/>
            <person name="Kyrpides N."/>
            <person name="Ivanova N."/>
            <person name="Richardson P."/>
        </authorList>
    </citation>
    <scope>NUCLEOTIDE SEQUENCE [LARGE SCALE GENOMIC DNA]</scope>
    <source>
        <strain>DSM 273 / BCRC 81028 / 2530</strain>
    </source>
</reference>
<sequence>MRNIRLRVEYDGTPYAGWQRQPGGIVTVQGELEACLSRILQERVNLAAAGRTDRGVHALGQVVNFQTASSLELQRIAHSLNCLLPDTIRVDCPQEVDMEFHARFSAAERQYRYFLMEEPSAVFGRFAGCSSRPLDLPLMHSLAVTLKGIHDFSAFSREDRDGTGSLCSVRMAGWYRHRGFLVFHIAANRFLRSMVRGLVGAMMDIGAGRLDPCSFKAMLDADAHARRVRPAAASGLFLSRVVYPDDYGCRKLR</sequence>
<gene>
    <name evidence="1" type="primary">truA</name>
    <name type="ordered locus">Plut_1175</name>
</gene>
<accession>Q3B3P4</accession>
<name>TRUA_CHLL3</name>
<feature type="chain" id="PRO_1000097768" description="tRNA pseudouridine synthase A">
    <location>
        <begin position="1"/>
        <end position="253"/>
    </location>
</feature>
<feature type="active site" description="Nucleophile" evidence="1">
    <location>
        <position position="53"/>
    </location>
</feature>
<feature type="binding site" evidence="1">
    <location>
        <position position="111"/>
    </location>
    <ligand>
        <name>substrate</name>
    </ligand>
</feature>
<dbReference type="EC" id="5.4.99.12" evidence="1"/>
<dbReference type="EMBL" id="CP000096">
    <property type="protein sequence ID" value="ABB24037.1"/>
    <property type="molecule type" value="Genomic_DNA"/>
</dbReference>
<dbReference type="RefSeq" id="WP_011357909.1">
    <property type="nucleotide sequence ID" value="NC_007512.1"/>
</dbReference>
<dbReference type="SMR" id="Q3B3P4"/>
<dbReference type="STRING" id="319225.Plut_1175"/>
<dbReference type="KEGG" id="plt:Plut_1175"/>
<dbReference type="eggNOG" id="COG0101">
    <property type="taxonomic scope" value="Bacteria"/>
</dbReference>
<dbReference type="HOGENOM" id="CLU_014673_0_2_10"/>
<dbReference type="OrthoDB" id="9811823at2"/>
<dbReference type="Proteomes" id="UP000002709">
    <property type="component" value="Chromosome"/>
</dbReference>
<dbReference type="GO" id="GO:0003723">
    <property type="term" value="F:RNA binding"/>
    <property type="evidence" value="ECO:0007669"/>
    <property type="project" value="InterPro"/>
</dbReference>
<dbReference type="GO" id="GO:0160147">
    <property type="term" value="F:tRNA pseudouridine(38-40) synthase activity"/>
    <property type="evidence" value="ECO:0007669"/>
    <property type="project" value="UniProtKB-EC"/>
</dbReference>
<dbReference type="GO" id="GO:0031119">
    <property type="term" value="P:tRNA pseudouridine synthesis"/>
    <property type="evidence" value="ECO:0007669"/>
    <property type="project" value="UniProtKB-UniRule"/>
</dbReference>
<dbReference type="CDD" id="cd02570">
    <property type="entry name" value="PseudoU_synth_EcTruA"/>
    <property type="match status" value="1"/>
</dbReference>
<dbReference type="FunFam" id="3.30.70.580:FF:000001">
    <property type="entry name" value="tRNA pseudouridine synthase A"/>
    <property type="match status" value="1"/>
</dbReference>
<dbReference type="Gene3D" id="3.30.70.660">
    <property type="entry name" value="Pseudouridine synthase I, catalytic domain, C-terminal subdomain"/>
    <property type="match status" value="1"/>
</dbReference>
<dbReference type="Gene3D" id="3.30.70.580">
    <property type="entry name" value="Pseudouridine synthase I, catalytic domain, N-terminal subdomain"/>
    <property type="match status" value="1"/>
</dbReference>
<dbReference type="HAMAP" id="MF_00171">
    <property type="entry name" value="TruA"/>
    <property type="match status" value="1"/>
</dbReference>
<dbReference type="InterPro" id="IPR020103">
    <property type="entry name" value="PsdUridine_synth_cat_dom_sf"/>
</dbReference>
<dbReference type="InterPro" id="IPR001406">
    <property type="entry name" value="PsdUridine_synth_TruA"/>
</dbReference>
<dbReference type="InterPro" id="IPR020097">
    <property type="entry name" value="PsdUridine_synth_TruA_a/b_dom"/>
</dbReference>
<dbReference type="InterPro" id="IPR020095">
    <property type="entry name" value="PsdUridine_synth_TruA_C"/>
</dbReference>
<dbReference type="InterPro" id="IPR020094">
    <property type="entry name" value="TruA/RsuA/RluB/E/F_N"/>
</dbReference>
<dbReference type="NCBIfam" id="TIGR00071">
    <property type="entry name" value="hisT_truA"/>
    <property type="match status" value="1"/>
</dbReference>
<dbReference type="PANTHER" id="PTHR11142">
    <property type="entry name" value="PSEUDOURIDYLATE SYNTHASE"/>
    <property type="match status" value="1"/>
</dbReference>
<dbReference type="PANTHER" id="PTHR11142:SF0">
    <property type="entry name" value="TRNA PSEUDOURIDINE SYNTHASE-LIKE 1"/>
    <property type="match status" value="1"/>
</dbReference>
<dbReference type="Pfam" id="PF01416">
    <property type="entry name" value="PseudoU_synth_1"/>
    <property type="match status" value="2"/>
</dbReference>
<dbReference type="PIRSF" id="PIRSF001430">
    <property type="entry name" value="tRNA_psdUrid_synth"/>
    <property type="match status" value="1"/>
</dbReference>
<dbReference type="SUPFAM" id="SSF55120">
    <property type="entry name" value="Pseudouridine synthase"/>
    <property type="match status" value="1"/>
</dbReference>
<protein>
    <recommendedName>
        <fullName evidence="1">tRNA pseudouridine synthase A</fullName>
        <ecNumber evidence="1">5.4.99.12</ecNumber>
    </recommendedName>
    <alternativeName>
        <fullName evidence="1">tRNA pseudouridine(38-40) synthase</fullName>
    </alternativeName>
    <alternativeName>
        <fullName evidence="1">tRNA pseudouridylate synthase I</fullName>
    </alternativeName>
    <alternativeName>
        <fullName evidence="1">tRNA-uridine isomerase I</fullName>
    </alternativeName>
</protein>
<proteinExistence type="inferred from homology"/>
<comment type="function">
    <text evidence="1">Formation of pseudouridine at positions 38, 39 and 40 in the anticodon stem and loop of transfer RNAs.</text>
</comment>
<comment type="catalytic activity">
    <reaction evidence="1">
        <text>uridine(38/39/40) in tRNA = pseudouridine(38/39/40) in tRNA</text>
        <dbReference type="Rhea" id="RHEA:22376"/>
        <dbReference type="Rhea" id="RHEA-COMP:10085"/>
        <dbReference type="Rhea" id="RHEA-COMP:10087"/>
        <dbReference type="ChEBI" id="CHEBI:65314"/>
        <dbReference type="ChEBI" id="CHEBI:65315"/>
        <dbReference type="EC" id="5.4.99.12"/>
    </reaction>
</comment>
<comment type="subunit">
    <text evidence="1">Homodimer.</text>
</comment>
<comment type="similarity">
    <text evidence="1">Belongs to the tRNA pseudouridine synthase TruA family.</text>
</comment>
<keyword id="KW-0413">Isomerase</keyword>
<keyword id="KW-1185">Reference proteome</keyword>
<keyword id="KW-0819">tRNA processing</keyword>